<name>HSLU_PHEZH</name>
<accession>B4RBI9</accession>
<keyword id="KW-0067">ATP-binding</keyword>
<keyword id="KW-0143">Chaperone</keyword>
<keyword id="KW-0963">Cytoplasm</keyword>
<keyword id="KW-0547">Nucleotide-binding</keyword>
<keyword id="KW-1185">Reference proteome</keyword>
<keyword id="KW-0346">Stress response</keyword>
<evidence type="ECO:0000255" key="1">
    <source>
        <dbReference type="HAMAP-Rule" id="MF_00249"/>
    </source>
</evidence>
<organism>
    <name type="scientific">Phenylobacterium zucineum (strain HLK1)</name>
    <dbReference type="NCBI Taxonomy" id="450851"/>
    <lineage>
        <taxon>Bacteria</taxon>
        <taxon>Pseudomonadati</taxon>
        <taxon>Pseudomonadota</taxon>
        <taxon>Alphaproteobacteria</taxon>
        <taxon>Caulobacterales</taxon>
        <taxon>Caulobacteraceae</taxon>
        <taxon>Phenylobacterium</taxon>
    </lineage>
</organism>
<gene>
    <name evidence="1" type="primary">hslU</name>
    <name type="ordered locus">PHZ_c0035</name>
</gene>
<feature type="chain" id="PRO_1000100960" description="ATP-dependent protease ATPase subunit HslU">
    <location>
        <begin position="1"/>
        <end position="434"/>
    </location>
</feature>
<feature type="binding site" evidence="1">
    <location>
        <position position="18"/>
    </location>
    <ligand>
        <name>ATP</name>
        <dbReference type="ChEBI" id="CHEBI:30616"/>
    </ligand>
</feature>
<feature type="binding site" evidence="1">
    <location>
        <begin position="60"/>
        <end position="65"/>
    </location>
    <ligand>
        <name>ATP</name>
        <dbReference type="ChEBI" id="CHEBI:30616"/>
    </ligand>
</feature>
<feature type="binding site" evidence="1">
    <location>
        <position position="247"/>
    </location>
    <ligand>
        <name>ATP</name>
        <dbReference type="ChEBI" id="CHEBI:30616"/>
    </ligand>
</feature>
<feature type="binding site" evidence="1">
    <location>
        <position position="312"/>
    </location>
    <ligand>
        <name>ATP</name>
        <dbReference type="ChEBI" id="CHEBI:30616"/>
    </ligand>
</feature>
<feature type="binding site" evidence="1">
    <location>
        <position position="384"/>
    </location>
    <ligand>
        <name>ATP</name>
        <dbReference type="ChEBI" id="CHEBI:30616"/>
    </ligand>
</feature>
<sequence>MTEFSPREIVSELDRFIVGHPEAKRAVAVALRNRWRRRRVPDDLRDEVTPKNILMIGPTGVGKTEIARRLAKLAQAPFLKVEATKFTEVGYVGRDVDQIVRDLVESAIQMVREKRRAAVRARAEAAAEERILDALTGPGSTAAREAFRRKLRAGELDDKEVELQLADTSSPFGAMDIPGQPGASMGVLNLGDMFGKAFGGRTKTHKTTVSGAWVPLIAEESDKLVDQEALTQEALELAENQGIVFLDEIDKVASRQDRAGADVSREGVQRDLLPLIEGTTVSTKHGPVKTDHILFIASGAFHVAKPSDLLPELQGRLPIRVELKALSRQDMRRILTEPEANLIRQHQALLATEGVTLTFTEDAIDALADAAVAVNGSVENIGARRLQTILEKVLEEVSFTAADRDGETITVDAAYVNGRIGDLAGNADLSKFIL</sequence>
<comment type="function">
    <text evidence="1">ATPase subunit of a proteasome-like degradation complex; this subunit has chaperone activity. The binding of ATP and its subsequent hydrolysis by HslU are essential for unfolding of protein substrates subsequently hydrolyzed by HslV. HslU recognizes the N-terminal part of its protein substrates and unfolds these before they are guided to HslV for hydrolysis.</text>
</comment>
<comment type="subunit">
    <text evidence="1">A double ring-shaped homohexamer of HslV is capped on each side by a ring-shaped HslU homohexamer. The assembly of the HslU/HslV complex is dependent on binding of ATP.</text>
</comment>
<comment type="subcellular location">
    <subcellularLocation>
        <location evidence="1">Cytoplasm</location>
    </subcellularLocation>
</comment>
<comment type="similarity">
    <text evidence="1">Belongs to the ClpX chaperone family. HslU subfamily.</text>
</comment>
<protein>
    <recommendedName>
        <fullName evidence="1">ATP-dependent protease ATPase subunit HslU</fullName>
    </recommendedName>
    <alternativeName>
        <fullName evidence="1">Unfoldase HslU</fullName>
    </alternativeName>
</protein>
<proteinExistence type="inferred from homology"/>
<reference key="1">
    <citation type="journal article" date="2008" name="BMC Genomics">
        <title>Complete genome of Phenylobacterium zucineum - a novel facultative intracellular bacterium isolated from human erythroleukemia cell line K562.</title>
        <authorList>
            <person name="Luo Y."/>
            <person name="Xu X."/>
            <person name="Ding Z."/>
            <person name="Liu Z."/>
            <person name="Zhang B."/>
            <person name="Yan Z."/>
            <person name="Sun J."/>
            <person name="Hu S."/>
            <person name="Hu X."/>
        </authorList>
    </citation>
    <scope>NUCLEOTIDE SEQUENCE [LARGE SCALE GENOMIC DNA]</scope>
    <source>
        <strain>HLK1</strain>
    </source>
</reference>
<dbReference type="EMBL" id="CP000747">
    <property type="protein sequence ID" value="ACG76449.1"/>
    <property type="molecule type" value="Genomic_DNA"/>
</dbReference>
<dbReference type="RefSeq" id="WP_012520597.1">
    <property type="nucleotide sequence ID" value="NC_011144.1"/>
</dbReference>
<dbReference type="SMR" id="B4RBI9"/>
<dbReference type="STRING" id="450851.PHZ_c0035"/>
<dbReference type="KEGG" id="pzu:PHZ_c0035"/>
<dbReference type="eggNOG" id="COG1220">
    <property type="taxonomic scope" value="Bacteria"/>
</dbReference>
<dbReference type="HOGENOM" id="CLU_033123_0_0_5"/>
<dbReference type="OrthoDB" id="9804062at2"/>
<dbReference type="Proteomes" id="UP000001868">
    <property type="component" value="Chromosome"/>
</dbReference>
<dbReference type="GO" id="GO:0009376">
    <property type="term" value="C:HslUV protease complex"/>
    <property type="evidence" value="ECO:0007669"/>
    <property type="project" value="UniProtKB-UniRule"/>
</dbReference>
<dbReference type="GO" id="GO:0005524">
    <property type="term" value="F:ATP binding"/>
    <property type="evidence" value="ECO:0007669"/>
    <property type="project" value="UniProtKB-UniRule"/>
</dbReference>
<dbReference type="GO" id="GO:0016887">
    <property type="term" value="F:ATP hydrolysis activity"/>
    <property type="evidence" value="ECO:0007669"/>
    <property type="project" value="InterPro"/>
</dbReference>
<dbReference type="GO" id="GO:0008233">
    <property type="term" value="F:peptidase activity"/>
    <property type="evidence" value="ECO:0007669"/>
    <property type="project" value="InterPro"/>
</dbReference>
<dbReference type="GO" id="GO:0036402">
    <property type="term" value="F:proteasome-activating activity"/>
    <property type="evidence" value="ECO:0007669"/>
    <property type="project" value="UniProtKB-UniRule"/>
</dbReference>
<dbReference type="GO" id="GO:0043335">
    <property type="term" value="P:protein unfolding"/>
    <property type="evidence" value="ECO:0007669"/>
    <property type="project" value="UniProtKB-UniRule"/>
</dbReference>
<dbReference type="GO" id="GO:0051603">
    <property type="term" value="P:proteolysis involved in protein catabolic process"/>
    <property type="evidence" value="ECO:0007669"/>
    <property type="project" value="TreeGrafter"/>
</dbReference>
<dbReference type="CDD" id="cd19498">
    <property type="entry name" value="RecA-like_HslU"/>
    <property type="match status" value="1"/>
</dbReference>
<dbReference type="FunFam" id="3.40.50.300:FF:000213">
    <property type="entry name" value="ATP-dependent protease ATPase subunit HslU"/>
    <property type="match status" value="1"/>
</dbReference>
<dbReference type="FunFam" id="3.40.50.300:FF:000220">
    <property type="entry name" value="ATP-dependent protease ATPase subunit HslU"/>
    <property type="match status" value="1"/>
</dbReference>
<dbReference type="Gene3D" id="1.10.8.60">
    <property type="match status" value="1"/>
</dbReference>
<dbReference type="Gene3D" id="3.40.50.300">
    <property type="entry name" value="P-loop containing nucleotide triphosphate hydrolases"/>
    <property type="match status" value="2"/>
</dbReference>
<dbReference type="HAMAP" id="MF_00249">
    <property type="entry name" value="HslU"/>
    <property type="match status" value="1"/>
</dbReference>
<dbReference type="InterPro" id="IPR003593">
    <property type="entry name" value="AAA+_ATPase"/>
</dbReference>
<dbReference type="InterPro" id="IPR050052">
    <property type="entry name" value="ATP-dep_Clp_protease_ClpX"/>
</dbReference>
<dbReference type="InterPro" id="IPR003959">
    <property type="entry name" value="ATPase_AAA_core"/>
</dbReference>
<dbReference type="InterPro" id="IPR019489">
    <property type="entry name" value="Clp_ATPase_C"/>
</dbReference>
<dbReference type="InterPro" id="IPR004491">
    <property type="entry name" value="HslU"/>
</dbReference>
<dbReference type="InterPro" id="IPR027417">
    <property type="entry name" value="P-loop_NTPase"/>
</dbReference>
<dbReference type="NCBIfam" id="TIGR00390">
    <property type="entry name" value="hslU"/>
    <property type="match status" value="1"/>
</dbReference>
<dbReference type="NCBIfam" id="NF003544">
    <property type="entry name" value="PRK05201.1"/>
    <property type="match status" value="1"/>
</dbReference>
<dbReference type="PANTHER" id="PTHR48102">
    <property type="entry name" value="ATP-DEPENDENT CLP PROTEASE ATP-BINDING SUBUNIT CLPX-LIKE, MITOCHONDRIAL-RELATED"/>
    <property type="match status" value="1"/>
</dbReference>
<dbReference type="PANTHER" id="PTHR48102:SF3">
    <property type="entry name" value="ATP-DEPENDENT PROTEASE ATPASE SUBUNIT HSLU"/>
    <property type="match status" value="1"/>
</dbReference>
<dbReference type="Pfam" id="PF00004">
    <property type="entry name" value="AAA"/>
    <property type="match status" value="1"/>
</dbReference>
<dbReference type="Pfam" id="PF07724">
    <property type="entry name" value="AAA_2"/>
    <property type="match status" value="1"/>
</dbReference>
<dbReference type="Pfam" id="PF10431">
    <property type="entry name" value="ClpB_D2-small"/>
    <property type="match status" value="1"/>
</dbReference>
<dbReference type="SMART" id="SM00382">
    <property type="entry name" value="AAA"/>
    <property type="match status" value="1"/>
</dbReference>
<dbReference type="SMART" id="SM01086">
    <property type="entry name" value="ClpB_D2-small"/>
    <property type="match status" value="1"/>
</dbReference>
<dbReference type="SUPFAM" id="SSF52540">
    <property type="entry name" value="P-loop containing nucleoside triphosphate hydrolases"/>
    <property type="match status" value="1"/>
</dbReference>